<evidence type="ECO:0000255" key="1"/>
<evidence type="ECO:0000255" key="2">
    <source>
        <dbReference type="PROSITE-ProRule" id="PRU00258"/>
    </source>
</evidence>
<evidence type="ECO:0000255" key="3">
    <source>
        <dbReference type="PROSITE-ProRule" id="PRU01348"/>
    </source>
</evidence>
<evidence type="ECO:0000255" key="4">
    <source>
        <dbReference type="PROSITE-ProRule" id="PRU01363"/>
    </source>
</evidence>
<evidence type="ECO:0000269" key="5">
    <source>
    </source>
</evidence>
<evidence type="ECO:0000303" key="6">
    <source>
    </source>
</evidence>
<evidence type="ECO:0000305" key="7">
    <source>
    </source>
</evidence>
<reference key="1">
    <citation type="journal article" date="2018" name="Front. Microbiol.">
        <title>Genomic and genetic insights into a cosmopolitan fungus, Paecilomyces variotii (Eurotiales).</title>
        <authorList>
            <person name="Urquhart A.S."/>
            <person name="Mondo S.J."/>
            <person name="Maekelae M.R."/>
            <person name="Hane J.K."/>
            <person name="Wiebenga A."/>
            <person name="He G."/>
            <person name="Mihaltcheva S."/>
            <person name="Pangilinan J."/>
            <person name="Lipzen A."/>
            <person name="Barry K."/>
            <person name="de Vries R.P."/>
            <person name="Grigoriev I.V."/>
            <person name="Idnurm A."/>
        </authorList>
    </citation>
    <scope>NUCLEOTIDE SEQUENCE [LARGE SCALE GENOMIC DNA]</scope>
    <source>
        <strain>ATCC 90900 / JCM 12815 / CBS 101075</strain>
    </source>
</reference>
<reference key="2">
    <citation type="journal article" date="2019" name="Fungal Biol. Biotechnol.">
        <title>The fungal gene cluster for biosynthesis of the antibacterial agent viriditoxin.</title>
        <authorList>
            <person name="Urquhart A.S."/>
            <person name="Hu J."/>
            <person name="Chooi Y.H."/>
            <person name="Idnurm A."/>
        </authorList>
    </citation>
    <scope>IDENTIFICATION</scope>
    <scope>FUNCTION</scope>
    <scope>DISRUPTION PHENOTYPE</scope>
</reference>
<protein>
    <recommendedName>
        <fullName evidence="6">Highly reducing polyketide synthase VdtX</fullName>
        <shortName evidence="6">HR-PKS VdtX</shortName>
        <ecNumber evidence="6">2.3.1.-</ecNumber>
    </recommendedName>
    <alternativeName>
        <fullName evidence="6">Viriditoxin biosynthesis cluster protein X</fullName>
    </alternativeName>
</protein>
<gene>
    <name evidence="6" type="primary">VdtX</name>
    <name type="ORF">C8Q69DRAFT_515060</name>
</gene>
<organism>
    <name type="scientific">Byssochlamys spectabilis</name>
    <name type="common">Paecilomyces variotii</name>
    <dbReference type="NCBI Taxonomy" id="264951"/>
    <lineage>
        <taxon>Eukaryota</taxon>
        <taxon>Fungi</taxon>
        <taxon>Dikarya</taxon>
        <taxon>Ascomycota</taxon>
        <taxon>Pezizomycotina</taxon>
        <taxon>Eurotiomycetes</taxon>
        <taxon>Eurotiomycetidae</taxon>
        <taxon>Eurotiales</taxon>
        <taxon>Thermoascaceae</taxon>
        <taxon>Paecilomyces</taxon>
    </lineage>
</organism>
<proteinExistence type="inferred from homology"/>
<dbReference type="EC" id="2.3.1.-" evidence="6"/>
<dbReference type="EMBL" id="RCNU01000014">
    <property type="protein sequence ID" value="RWQ92174.1"/>
    <property type="molecule type" value="Genomic_DNA"/>
</dbReference>
<dbReference type="SMR" id="A0A443HK66"/>
<dbReference type="STRING" id="264951.A0A443HK66"/>
<dbReference type="VEuPathDB" id="FungiDB:C8Q69DRAFT_515060"/>
<dbReference type="Proteomes" id="UP000283841">
    <property type="component" value="Unassembled WGS sequence"/>
</dbReference>
<dbReference type="GO" id="GO:0004312">
    <property type="term" value="F:fatty acid synthase activity"/>
    <property type="evidence" value="ECO:0007669"/>
    <property type="project" value="TreeGrafter"/>
</dbReference>
<dbReference type="GO" id="GO:0008168">
    <property type="term" value="F:methyltransferase activity"/>
    <property type="evidence" value="ECO:0007669"/>
    <property type="project" value="UniProtKB-KW"/>
</dbReference>
<dbReference type="GO" id="GO:0016491">
    <property type="term" value="F:oxidoreductase activity"/>
    <property type="evidence" value="ECO:0007669"/>
    <property type="project" value="UniProtKB-KW"/>
</dbReference>
<dbReference type="GO" id="GO:0031177">
    <property type="term" value="F:phosphopantetheine binding"/>
    <property type="evidence" value="ECO:0007669"/>
    <property type="project" value="InterPro"/>
</dbReference>
<dbReference type="GO" id="GO:0006633">
    <property type="term" value="P:fatty acid biosynthetic process"/>
    <property type="evidence" value="ECO:0007669"/>
    <property type="project" value="TreeGrafter"/>
</dbReference>
<dbReference type="GO" id="GO:0032259">
    <property type="term" value="P:methylation"/>
    <property type="evidence" value="ECO:0007669"/>
    <property type="project" value="UniProtKB-KW"/>
</dbReference>
<dbReference type="GO" id="GO:0030639">
    <property type="term" value="P:polyketide biosynthetic process"/>
    <property type="evidence" value="ECO:0007669"/>
    <property type="project" value="UniProtKB-ARBA"/>
</dbReference>
<dbReference type="CDD" id="cd05195">
    <property type="entry name" value="enoyl_red"/>
    <property type="match status" value="1"/>
</dbReference>
<dbReference type="CDD" id="cd00833">
    <property type="entry name" value="PKS"/>
    <property type="match status" value="1"/>
</dbReference>
<dbReference type="Gene3D" id="3.40.47.10">
    <property type="match status" value="1"/>
</dbReference>
<dbReference type="Gene3D" id="1.10.1200.10">
    <property type="entry name" value="ACP-like"/>
    <property type="match status" value="1"/>
</dbReference>
<dbReference type="Gene3D" id="3.30.70.250">
    <property type="entry name" value="Malonyl-CoA ACP transacylase, ACP-binding"/>
    <property type="match status" value="1"/>
</dbReference>
<dbReference type="Gene3D" id="3.40.366.10">
    <property type="entry name" value="Malonyl-Coenzyme A Acyl Carrier Protein, domain 2"/>
    <property type="match status" value="1"/>
</dbReference>
<dbReference type="Gene3D" id="3.90.180.10">
    <property type="entry name" value="Medium-chain alcohol dehydrogenases, catalytic domain"/>
    <property type="match status" value="1"/>
</dbReference>
<dbReference type="Gene3D" id="3.40.50.720">
    <property type="entry name" value="NAD(P)-binding Rossmann-like Domain"/>
    <property type="match status" value="2"/>
</dbReference>
<dbReference type="Gene3D" id="3.10.129.110">
    <property type="entry name" value="Polyketide synthase dehydratase"/>
    <property type="match status" value="1"/>
</dbReference>
<dbReference type="Gene3D" id="3.40.50.150">
    <property type="entry name" value="Vaccinia Virus protein VP39"/>
    <property type="match status" value="1"/>
</dbReference>
<dbReference type="InterPro" id="IPR001227">
    <property type="entry name" value="Ac_transferase_dom_sf"/>
</dbReference>
<dbReference type="InterPro" id="IPR036736">
    <property type="entry name" value="ACP-like_sf"/>
</dbReference>
<dbReference type="InterPro" id="IPR014043">
    <property type="entry name" value="Acyl_transferase_dom"/>
</dbReference>
<dbReference type="InterPro" id="IPR016035">
    <property type="entry name" value="Acyl_Trfase/lysoPLipase"/>
</dbReference>
<dbReference type="InterPro" id="IPR013149">
    <property type="entry name" value="ADH-like_C"/>
</dbReference>
<dbReference type="InterPro" id="IPR014031">
    <property type="entry name" value="Ketoacyl_synth_C"/>
</dbReference>
<dbReference type="InterPro" id="IPR014030">
    <property type="entry name" value="Ketoacyl_synth_N"/>
</dbReference>
<dbReference type="InterPro" id="IPR036291">
    <property type="entry name" value="NAD(P)-bd_dom_sf"/>
</dbReference>
<dbReference type="InterPro" id="IPR056501">
    <property type="entry name" value="NAD-bd_HRPKS_sdrA"/>
</dbReference>
<dbReference type="InterPro" id="IPR032821">
    <property type="entry name" value="PKS_assoc"/>
</dbReference>
<dbReference type="InterPro" id="IPR020841">
    <property type="entry name" value="PKS_Beta-ketoAc_synthase_dom"/>
</dbReference>
<dbReference type="InterPro" id="IPR042104">
    <property type="entry name" value="PKS_dehydratase_sf"/>
</dbReference>
<dbReference type="InterPro" id="IPR020807">
    <property type="entry name" value="PKS_DH"/>
</dbReference>
<dbReference type="InterPro" id="IPR049551">
    <property type="entry name" value="PKS_DH_C"/>
</dbReference>
<dbReference type="InterPro" id="IPR049552">
    <property type="entry name" value="PKS_DH_N"/>
</dbReference>
<dbReference type="InterPro" id="IPR020843">
    <property type="entry name" value="PKS_ER"/>
</dbReference>
<dbReference type="InterPro" id="IPR013968">
    <property type="entry name" value="PKS_KR"/>
</dbReference>
<dbReference type="InterPro" id="IPR049900">
    <property type="entry name" value="PKS_mFAS_DH"/>
</dbReference>
<dbReference type="InterPro" id="IPR050091">
    <property type="entry name" value="PKS_NRPS_Biosynth_Enz"/>
</dbReference>
<dbReference type="InterPro" id="IPR020806">
    <property type="entry name" value="PKS_PP-bd"/>
</dbReference>
<dbReference type="InterPro" id="IPR009081">
    <property type="entry name" value="PP-bd_ACP"/>
</dbReference>
<dbReference type="InterPro" id="IPR006162">
    <property type="entry name" value="Ppantetheine_attach_site"/>
</dbReference>
<dbReference type="InterPro" id="IPR029063">
    <property type="entry name" value="SAM-dependent_MTases_sf"/>
</dbReference>
<dbReference type="InterPro" id="IPR016039">
    <property type="entry name" value="Thiolase-like"/>
</dbReference>
<dbReference type="PANTHER" id="PTHR43775">
    <property type="entry name" value="FATTY ACID SYNTHASE"/>
    <property type="match status" value="1"/>
</dbReference>
<dbReference type="PANTHER" id="PTHR43775:SF37">
    <property type="entry name" value="SI:DKEY-61P9.11"/>
    <property type="match status" value="1"/>
</dbReference>
<dbReference type="Pfam" id="PF00698">
    <property type="entry name" value="Acyl_transf_1"/>
    <property type="match status" value="1"/>
</dbReference>
<dbReference type="Pfam" id="PF00107">
    <property type="entry name" value="ADH_zinc_N"/>
    <property type="match status" value="1"/>
</dbReference>
<dbReference type="Pfam" id="PF16197">
    <property type="entry name" value="KAsynt_C_assoc"/>
    <property type="match status" value="1"/>
</dbReference>
<dbReference type="Pfam" id="PF00109">
    <property type="entry name" value="ketoacyl-synt"/>
    <property type="match status" value="1"/>
</dbReference>
<dbReference type="Pfam" id="PF02801">
    <property type="entry name" value="Ketoacyl-synt_C"/>
    <property type="match status" value="1"/>
</dbReference>
<dbReference type="Pfam" id="PF08659">
    <property type="entry name" value="KR"/>
    <property type="match status" value="1"/>
</dbReference>
<dbReference type="Pfam" id="PF23114">
    <property type="entry name" value="NAD-bd_HRPKS_sdrA"/>
    <property type="match status" value="1"/>
</dbReference>
<dbReference type="Pfam" id="PF21089">
    <property type="entry name" value="PKS_DH_N"/>
    <property type="match status" value="1"/>
</dbReference>
<dbReference type="Pfam" id="PF00550">
    <property type="entry name" value="PP-binding"/>
    <property type="match status" value="1"/>
</dbReference>
<dbReference type="Pfam" id="PF14765">
    <property type="entry name" value="PS-DH"/>
    <property type="match status" value="1"/>
</dbReference>
<dbReference type="SMART" id="SM00827">
    <property type="entry name" value="PKS_AT"/>
    <property type="match status" value="1"/>
</dbReference>
<dbReference type="SMART" id="SM00826">
    <property type="entry name" value="PKS_DH"/>
    <property type="match status" value="1"/>
</dbReference>
<dbReference type="SMART" id="SM00829">
    <property type="entry name" value="PKS_ER"/>
    <property type="match status" value="1"/>
</dbReference>
<dbReference type="SMART" id="SM00822">
    <property type="entry name" value="PKS_KR"/>
    <property type="match status" value="1"/>
</dbReference>
<dbReference type="SMART" id="SM00825">
    <property type="entry name" value="PKS_KS"/>
    <property type="match status" value="1"/>
</dbReference>
<dbReference type="SMART" id="SM00823">
    <property type="entry name" value="PKS_PP"/>
    <property type="match status" value="1"/>
</dbReference>
<dbReference type="SUPFAM" id="SSF47336">
    <property type="entry name" value="ACP-like"/>
    <property type="match status" value="1"/>
</dbReference>
<dbReference type="SUPFAM" id="SSF52151">
    <property type="entry name" value="FabD/lysophospholipase-like"/>
    <property type="match status" value="1"/>
</dbReference>
<dbReference type="SUPFAM" id="SSF51735">
    <property type="entry name" value="NAD(P)-binding Rossmann-fold domains"/>
    <property type="match status" value="2"/>
</dbReference>
<dbReference type="SUPFAM" id="SSF53335">
    <property type="entry name" value="S-adenosyl-L-methionine-dependent methyltransferases"/>
    <property type="match status" value="1"/>
</dbReference>
<dbReference type="SUPFAM" id="SSF53901">
    <property type="entry name" value="Thiolase-like"/>
    <property type="match status" value="1"/>
</dbReference>
<dbReference type="PROSITE" id="PS50075">
    <property type="entry name" value="CARRIER"/>
    <property type="match status" value="1"/>
</dbReference>
<dbReference type="PROSITE" id="PS52004">
    <property type="entry name" value="KS3_2"/>
    <property type="match status" value="1"/>
</dbReference>
<dbReference type="PROSITE" id="PS00012">
    <property type="entry name" value="PHOSPHOPANTETHEINE"/>
    <property type="match status" value="1"/>
</dbReference>
<dbReference type="PROSITE" id="PS52019">
    <property type="entry name" value="PKS_MFAS_DH"/>
    <property type="match status" value="1"/>
</dbReference>
<comment type="function">
    <text evidence="5">Highly reducing polyketide synthase; part of the gene cluster that mediates the biosynthesis of viriditoxin, one of the 'classical' secondary metabolites produced by fungi and that has antibacterial activity (PubMed:31304040). The first step is performed by the polyketide synthase VdtA which condenses one acetyl-CoA and 6 malonyl-CoA units to form the heptaketide monomer backbone of viriditoxin (PubMed:31304040). The product of VdtA is then O-methylated on C7 by the O-methyltransferase VdtC. The O-methyl group is important for the stereoselective coupling of the monomers at the final step of viriditoxin biosynthesis (PubMed:31304040). The short-chain dehydrogenase/reductase VdtF is involved in the reduction of the C3-C4 double bond (PubMed:31304040). The FAD-binding monooxygenase VdtE then converts the ketone group into a methyl-ester group to yield semi-viriditoxin (PubMed:31304040). Finally, the laccase VdtB is involved in dimerization of 2 semi-viriditoxin molecules to yield the final viriditoxin. The non-catalytic carboxylesterase-like protein VdtD affects the stereochemistical outcome of the coupling (PubMed:31304040). The highly reducing polyketide synthase VdtX is not involved in viriditoxin synthesis, but might possibly play a role in the production of additional metabolites not identified yet (PubMed:31304040).</text>
</comment>
<comment type="domain">
    <text evidence="7">Multidomain protein; including a ketosynthase (KS) that catalyzes repeated decarboxylative condensation to elongate the polyketide backbone; a malonyl-CoA:ACP transacylase (MAT) that selects and transfers the extender unit malonyl-CoA; a dehydratase (DH) domain that reduces hydroxyl groups to enoyl groups; a methyltransferase (CMeT) domain responsible for the incorporation of methyl groups; an enoylreductase (ER) domain that reduces enoyl groups to alkyl group; a ketoreductase (KR) domain that catalyzes beta-ketoreduction steps; and an acyl-carrier protein (ACP) that serves as the tether of the growing and completed polyketide via its phosphopantetheinyl arm.</text>
</comment>
<comment type="disruption phenotype">
    <text evidence="5">Does not affect the production of viriditoxin.</text>
</comment>
<name>VDTX1_BYSSP</name>
<feature type="chain" id="PRO_0000448342" description="Highly reducing polyketide synthase VdtX">
    <location>
        <begin position="1"/>
        <end position="2193"/>
    </location>
</feature>
<feature type="domain" description="Ketosynthase family 3 (KS3)" evidence="3">
    <location>
        <begin position="1"/>
        <end position="417"/>
    </location>
</feature>
<feature type="domain" description="PKS/mFAS DH" evidence="4">
    <location>
        <begin position="877"/>
        <end position="1202"/>
    </location>
</feature>
<feature type="domain" description="Carrier" evidence="2">
    <location>
        <begin position="2102"/>
        <end position="2183"/>
    </location>
</feature>
<feature type="region of interest" description="Malonyl-CoA:ACP transacylase (MAT) domain" evidence="1">
    <location>
        <begin position="513"/>
        <end position="809"/>
    </location>
</feature>
<feature type="region of interest" description="Dehydratase (DH) domain" evidence="1">
    <location>
        <begin position="877"/>
        <end position="1128"/>
    </location>
</feature>
<feature type="region of interest" description="N-terminal hotdog fold" evidence="4">
    <location>
        <begin position="877"/>
        <end position="1001"/>
    </location>
</feature>
<feature type="region of interest" description="C-terminal hotdog fold" evidence="4">
    <location>
        <begin position="1032"/>
        <end position="1202"/>
    </location>
</feature>
<feature type="region of interest" description="Methyltransferase (CMet) domain" evidence="1">
    <location>
        <begin position="1256"/>
        <end position="1390"/>
    </location>
</feature>
<feature type="region of interest" description="Enoyl reductase (ER) domain" evidence="1">
    <location>
        <begin position="1575"/>
        <end position="1783"/>
    </location>
</feature>
<feature type="region of interest" description="Ketoreductase (KR) domain" evidence="1">
    <location>
        <begin position="1807"/>
        <end position="1981"/>
    </location>
</feature>
<feature type="active site" description="For beta-ketoacyl synthase activity" evidence="3">
    <location>
        <position position="170"/>
    </location>
</feature>
<feature type="active site" description="For beta-ketoacyl synthase activity" evidence="3">
    <location>
        <position position="306"/>
    </location>
</feature>
<feature type="active site" description="For beta-ketoacyl synthase activity" evidence="3">
    <location>
        <position position="340"/>
    </location>
</feature>
<feature type="active site" description="Proton acceptor; for dehydratase activity" evidence="4">
    <location>
        <position position="909"/>
    </location>
</feature>
<feature type="active site" description="Proton donor; for dehydratase activity" evidence="4">
    <location>
        <position position="1093"/>
    </location>
</feature>
<feature type="modified residue" description="O-(pantetheine 4'-phosphoryl)serine" evidence="2">
    <location>
        <position position="2143"/>
    </location>
</feature>
<accession>A0A443HK66</accession>
<sequence length="2193" mass="240602">MAICGIAVRLPGGISNDAQLWDFLLAKRDARSQVPGSRYNISGYHSDSGKHGTSKSKYGYFLDESVDLGTLDTSFFSFTKLELEYIDPCQRQLLEVVRECFESAGEVNYRGKDIGCFVGSFGDDWTENLTHDEQTSAKYPLMVGGDFATPNRVSYEYNLHGPSVSIRTACSSSLVALHSACLSIQNGDCSAAIVAGFNLILTPTMTMIMSSKGVLSADGSSKSFDADADGYGRGEAVNAVYIKPLHDAIRDGNPIRAVIRGTATNSDGKSAGFTVPSADAQEDVIRKAYKAAGISDLSQTAFVECHGTGTTVGDPIEVAAIANTFGGDMYIGSVKPNVGHSEGASGLTSLIKAVLAVENRTIPPNIKFNTPNPKIPFEAKKITVPVEATPWPWNRCVRASVNSFGMGGVNAHVIIESADNFTPPTSEVIEEHDSTPQLLLFSANTQDSLEAMIQRNLAYLRENTDSLRDLVYTMGARREHLSFRAASIVHSDMSVTTASFGKAPSSPPDIVMVFAGQGAQWPGMGVELFKSNATFRRSILEMDSVLQSLPDAPAWSIADEISKEHQTSMLYLSSYSQPICTALQVALVNTLFELNIRPYAVIGHSSGELAAAYAAGRLTASQAVTLAYYRGIVAGKVAQAGYYPFLRPGVVVACENSPSSVTISGDIDQVQYVMQEISLAHPEILCRQIKSDTAYHSHHMKSVGDTYHSFINPFFRGETEVNCQPVHFFSTVTGDELSDGDHVGPKYWQQNLESRVLFQGALENIISRQRSRHLLFLDVSPHSTLAGPIRQTLEQAEVAHPYVPCLIRFKNCAESFLSTIGQLYSHRQPLDFNMLTNPDRTAKVLTDVPTYPWQHGYSNLYTTRQNNEWLFRKQPKHELLGTRVVDSTDNEPCWRNVLYLEHVTWLRDHKVSGNIVFPAAGYVMMAGEAVRQIGSTASGFIVRQMVLDTAMVLNQSNPTEIVTSLRKHRRDRWYSFTISSHNGVKWIEHCYGEVAQENLSRDINVSNWYKTLSRGGVEFGPAFQCVESQSCSVTSNTVSGRIVSKLDSVLHIVYGAIYKGFDWQVESLPVPTSIGEIMIGECVSDLDVTMWADVSRNSNILVNGEAFGSDGCLLIRIKDIVLRPLGANQACFEEDESHAGARLLWKPSMQFLNLADLIQTPVNWTKQTMLLNDFTSLCIERALCLLHAQGDWLQRQPKPSSEQSMESLVEKILATSAAPCARAMIKVLDNIVPICKGEIDALEVLMGDDTLYELYNYLNEPQQRILEIGAGTGGTTAKILPRTKYSTYTFTDISAAFFPAAKDRFQCHANVVYRTLDITKDPLDQANVLHATPNLYETLSNLLLEELCGDAKFTNFIVGVLPGWWAGESDGRADEPYISPDRWDSILKAAAPPLHSLAFMLASPSCVPESPLKRNVTLLSDVTSSEIAVRMQKQLLSRGYSVGVQSLDQSLMDGEDVIILVDTVSPFFHNLDSRKLSTFQNLLRELQRSHSGALWVTRSIQIDCRDPRYSPTLGVARTVRSEFGLDFGTCEVDTLKYTSIGLVIDVFEAFHGRRHGQNAYPEYEYAIREDTADAGQQVQLLGDDEVELQVDTAGVNFLTVLINSASDGVGLAAIQISKMIGATIYATVIGEDKVEYLTASHGIPRDHIFNSRDSSFLDGIMRVTNGRGVDLVLTSLSADFIQASCDCVANFGKLVNLSKPTAANQGQFPIDSFHPNMSYASVDIIDYIKRRPKESKRLLEEIVELYKQGHIQPITPVKTFTATDIRQCFDYMQSGQHIGQLRLSLKSQDTFIEAVCSPKTMIFQSDASYLLVGGLGGLGAEIARWMAEHGARNLIFLSRSADAESNIRLFRELESQGCSVQAIKGSVCNASDVKRAISAARIKLKGIFNMSMVLQDASLLKMSSDEWNAATGPKIQGTWNLHDASLDQDLDFFLLFSSMGGILGIPGQANYASANTFMDAFVQFRHSSHLPASVIDIGEVQGIGHVANNPEILNRLKLLECARMSQKDLFHAITIAISHSLPPQTLDYSRYENPAQFITGLRDTTGMLDSTGGKSMLLDSRLAAYVGNSAAVTAPTETKTSANKLNNFVSSAATDSAILSEPSATQFVSLEIARWVFDLLMKPVDDDSEIDLSRSLVDVGLDSLAAVEMRSWLKSSLGLDISVLEIMASPSLAAMGEHVIRELVRKFGGDNKN</sequence>
<keyword id="KW-0012">Acyltransferase</keyword>
<keyword id="KW-0489">Methyltransferase</keyword>
<keyword id="KW-0511">Multifunctional enzyme</keyword>
<keyword id="KW-0521">NADP</keyword>
<keyword id="KW-0560">Oxidoreductase</keyword>
<keyword id="KW-0596">Phosphopantetheine</keyword>
<keyword id="KW-0597">Phosphoprotein</keyword>
<keyword id="KW-1185">Reference proteome</keyword>
<keyword id="KW-0808">Transferase</keyword>